<gene>
    <name type="primary">MTC2</name>
    <name type="ORF">C1Q_04498</name>
</gene>
<reference key="1">
    <citation type="journal article" date="2009" name="Genome Res.">
        <title>Genome structure of a Saccharomyces cerevisiae strain widely used in bioethanol production.</title>
        <authorList>
            <person name="Argueso J.L."/>
            <person name="Carazzolle M.F."/>
            <person name="Mieczkowski P.A."/>
            <person name="Duarte F.M."/>
            <person name="Netto O.V.C."/>
            <person name="Missawa S.K."/>
            <person name="Galzerani F."/>
            <person name="Costa G.G.L."/>
            <person name="Vidal R.O."/>
            <person name="Noronha M.F."/>
            <person name="Dominska M."/>
            <person name="Andrietta M.G.S."/>
            <person name="Andrietta S.R."/>
            <person name="Cunha A.F."/>
            <person name="Gomes L.H."/>
            <person name="Tavares F.C.A."/>
            <person name="Alcarde A.R."/>
            <person name="Dietrich F.S."/>
            <person name="McCusker J.H."/>
            <person name="Petes T.D."/>
            <person name="Pereira G.A.G."/>
        </authorList>
    </citation>
    <scope>NUCLEOTIDE SEQUENCE [LARGE SCALE GENOMIC DNA]</scope>
    <source>
        <strain>JAY291</strain>
    </source>
</reference>
<feature type="chain" id="PRO_0000407766" description="Maintenance of telomere capping protein 2">
    <location>
        <begin position="1"/>
        <end position="357"/>
    </location>
</feature>
<protein>
    <recommendedName>
        <fullName>Maintenance of telomere capping protein 2</fullName>
    </recommendedName>
</protein>
<organism>
    <name type="scientific">Saccharomyces cerevisiae (strain JAY291)</name>
    <name type="common">Baker's yeast</name>
    <dbReference type="NCBI Taxonomy" id="574961"/>
    <lineage>
        <taxon>Eukaryota</taxon>
        <taxon>Fungi</taxon>
        <taxon>Dikarya</taxon>
        <taxon>Ascomycota</taxon>
        <taxon>Saccharomycotina</taxon>
        <taxon>Saccharomycetes</taxon>
        <taxon>Saccharomycetales</taxon>
        <taxon>Saccharomycetaceae</taxon>
        <taxon>Saccharomyces</taxon>
    </lineage>
</organism>
<evidence type="ECO:0000250" key="1"/>
<evidence type="ECO:0000305" key="2"/>
<accession>C7GVL2</accession>
<sequence length="357" mass="39808">MGDHNLPDFQTCLKFSVTAKKSFLCMYRDSVSKEKLASSMPSTCDIQLKRAINDAYPGGGIKVTVLNSTTASLDSLATTHVKEFEIVIIPDINSLLQPDQAKLVKIMRDCTVAIEKAQSTRIFIGVVHWNNPVQPSGAAKDGDEAGKPAPKTRIFLPTSLRMGAWLKHKFWFACAPPYLDFESSTESSINTRANNSIGMAEEEKQEPESKRSIILNEEANLNDVFVGSTVRRYILDIMVHLRTHRLTYNAKAGGVYTNSLDDVVLLSRLIGLHSGKMFVSPSHVKEASRWYFPMHLELVQRSSMDSSLLYGSDPNLVDEMLEKLAKIKCEEVNEFENPLFLESLVVKNVLSKVVPPV</sequence>
<proteinExistence type="inferred from homology"/>
<comment type="function">
    <text evidence="1">May be involved in telomere capping.</text>
</comment>
<comment type="similarity">
    <text evidence="2">Belongs to the MTC2 family.</text>
</comment>
<dbReference type="EMBL" id="ACFL01000357">
    <property type="protein sequence ID" value="EEU05157.1"/>
    <property type="molecule type" value="Genomic_DNA"/>
</dbReference>
<dbReference type="Proteomes" id="UP000008073">
    <property type="component" value="Unassembled WGS sequence"/>
</dbReference>
<name>MTC2_YEAS2</name>